<name>ATPD_CUPPJ</name>
<proteinExistence type="inferred from homology"/>
<sequence length="179" mass="19103">MAETATIARPYAEALFRVASEAGNLGAWSELVSEMGQIAANPDIKALADDPNVPGDKLGDLFLSVVKSPVNDEARRFVKLLVENNRLTVMPEVAEQFHALKNAREGSSDVEITSAFPLDGQPLNDLVAALERKFGRKLYAKVAVDPSLIGGVSVKVGDEVLDTSVRARLAAMQTALTAV</sequence>
<evidence type="ECO:0000255" key="1">
    <source>
        <dbReference type="HAMAP-Rule" id="MF_01416"/>
    </source>
</evidence>
<dbReference type="EMBL" id="CP000090">
    <property type="protein sequence ID" value="AAZ62707.1"/>
    <property type="molecule type" value="Genomic_DNA"/>
</dbReference>
<dbReference type="SMR" id="Q46VX7"/>
<dbReference type="STRING" id="264198.Reut_A3349"/>
<dbReference type="KEGG" id="reu:Reut_A3349"/>
<dbReference type="eggNOG" id="COG0712">
    <property type="taxonomic scope" value="Bacteria"/>
</dbReference>
<dbReference type="HOGENOM" id="CLU_085114_3_0_4"/>
<dbReference type="OrthoDB" id="9816221at2"/>
<dbReference type="GO" id="GO:0005886">
    <property type="term" value="C:plasma membrane"/>
    <property type="evidence" value="ECO:0007669"/>
    <property type="project" value="UniProtKB-SubCell"/>
</dbReference>
<dbReference type="GO" id="GO:0045259">
    <property type="term" value="C:proton-transporting ATP synthase complex"/>
    <property type="evidence" value="ECO:0007669"/>
    <property type="project" value="UniProtKB-KW"/>
</dbReference>
<dbReference type="GO" id="GO:0046933">
    <property type="term" value="F:proton-transporting ATP synthase activity, rotational mechanism"/>
    <property type="evidence" value="ECO:0007669"/>
    <property type="project" value="UniProtKB-UniRule"/>
</dbReference>
<dbReference type="Gene3D" id="1.10.520.20">
    <property type="entry name" value="N-terminal domain of the delta subunit of the F1F0-ATP synthase"/>
    <property type="match status" value="1"/>
</dbReference>
<dbReference type="HAMAP" id="MF_01416">
    <property type="entry name" value="ATP_synth_delta_bact"/>
    <property type="match status" value="1"/>
</dbReference>
<dbReference type="InterPro" id="IPR026015">
    <property type="entry name" value="ATP_synth_OSCP/delta_N_sf"/>
</dbReference>
<dbReference type="InterPro" id="IPR000711">
    <property type="entry name" value="ATPase_OSCP/dsu"/>
</dbReference>
<dbReference type="NCBIfam" id="TIGR01145">
    <property type="entry name" value="ATP_synt_delta"/>
    <property type="match status" value="1"/>
</dbReference>
<dbReference type="NCBIfam" id="NF004402">
    <property type="entry name" value="PRK05758.2-2"/>
    <property type="match status" value="1"/>
</dbReference>
<dbReference type="PANTHER" id="PTHR11910">
    <property type="entry name" value="ATP SYNTHASE DELTA CHAIN"/>
    <property type="match status" value="1"/>
</dbReference>
<dbReference type="Pfam" id="PF00213">
    <property type="entry name" value="OSCP"/>
    <property type="match status" value="1"/>
</dbReference>
<dbReference type="PRINTS" id="PR00125">
    <property type="entry name" value="ATPASEDELTA"/>
</dbReference>
<dbReference type="SUPFAM" id="SSF47928">
    <property type="entry name" value="N-terminal domain of the delta subunit of the F1F0-ATP synthase"/>
    <property type="match status" value="1"/>
</dbReference>
<protein>
    <recommendedName>
        <fullName evidence="1">ATP synthase subunit delta</fullName>
    </recommendedName>
    <alternativeName>
        <fullName evidence="1">ATP synthase F(1) sector subunit delta</fullName>
    </alternativeName>
    <alternativeName>
        <fullName evidence="1">F-type ATPase subunit delta</fullName>
        <shortName evidence="1">F-ATPase subunit delta</shortName>
    </alternativeName>
</protein>
<organism>
    <name type="scientific">Cupriavidus pinatubonensis (strain JMP 134 / LMG 1197)</name>
    <name type="common">Cupriavidus necator (strain JMP 134)</name>
    <dbReference type="NCBI Taxonomy" id="264198"/>
    <lineage>
        <taxon>Bacteria</taxon>
        <taxon>Pseudomonadati</taxon>
        <taxon>Pseudomonadota</taxon>
        <taxon>Betaproteobacteria</taxon>
        <taxon>Burkholderiales</taxon>
        <taxon>Burkholderiaceae</taxon>
        <taxon>Cupriavidus</taxon>
    </lineage>
</organism>
<feature type="chain" id="PRO_0000371087" description="ATP synthase subunit delta">
    <location>
        <begin position="1"/>
        <end position="179"/>
    </location>
</feature>
<gene>
    <name evidence="1" type="primary">atpH</name>
    <name type="ordered locus">Reut_A3349</name>
</gene>
<comment type="function">
    <text evidence="1">F(1)F(0) ATP synthase produces ATP from ADP in the presence of a proton or sodium gradient. F-type ATPases consist of two structural domains, F(1) containing the extramembraneous catalytic core and F(0) containing the membrane proton channel, linked together by a central stalk and a peripheral stalk. During catalysis, ATP synthesis in the catalytic domain of F(1) is coupled via a rotary mechanism of the central stalk subunits to proton translocation.</text>
</comment>
<comment type="function">
    <text evidence="1">This protein is part of the stalk that links CF(0) to CF(1). It either transmits conformational changes from CF(0) to CF(1) or is implicated in proton conduction.</text>
</comment>
<comment type="subunit">
    <text evidence="1">F-type ATPases have 2 components, F(1) - the catalytic core - and F(0) - the membrane proton channel. F(1) has five subunits: alpha(3), beta(3), gamma(1), delta(1), epsilon(1). F(0) has three main subunits: a(1), b(2) and c(10-14). The alpha and beta chains form an alternating ring which encloses part of the gamma chain. F(1) is attached to F(0) by a central stalk formed by the gamma and epsilon chains, while a peripheral stalk is formed by the delta and b chains.</text>
</comment>
<comment type="subcellular location">
    <subcellularLocation>
        <location evidence="1">Cell inner membrane</location>
        <topology evidence="1">Peripheral membrane protein</topology>
    </subcellularLocation>
</comment>
<comment type="similarity">
    <text evidence="1">Belongs to the ATPase delta chain family.</text>
</comment>
<reference key="1">
    <citation type="journal article" date="2010" name="PLoS ONE">
        <title>The complete multipartite genome sequence of Cupriavidus necator JMP134, a versatile pollutant degrader.</title>
        <authorList>
            <person name="Lykidis A."/>
            <person name="Perez-Pantoja D."/>
            <person name="Ledger T."/>
            <person name="Mavromatis K."/>
            <person name="Anderson I.J."/>
            <person name="Ivanova N.N."/>
            <person name="Hooper S.D."/>
            <person name="Lapidus A."/>
            <person name="Lucas S."/>
            <person name="Gonzalez B."/>
            <person name="Kyrpides N.C."/>
        </authorList>
    </citation>
    <scope>NUCLEOTIDE SEQUENCE [LARGE SCALE GENOMIC DNA]</scope>
    <source>
        <strain>JMP134 / LMG 1197</strain>
    </source>
</reference>
<keyword id="KW-0066">ATP synthesis</keyword>
<keyword id="KW-0997">Cell inner membrane</keyword>
<keyword id="KW-1003">Cell membrane</keyword>
<keyword id="KW-0139">CF(1)</keyword>
<keyword id="KW-0375">Hydrogen ion transport</keyword>
<keyword id="KW-0406">Ion transport</keyword>
<keyword id="KW-0472">Membrane</keyword>
<keyword id="KW-0813">Transport</keyword>
<accession>Q46VX7</accession>